<feature type="transit peptide" description="Mitochondrion" evidence="2">
    <location>
        <begin position="1"/>
        <end position="26"/>
    </location>
</feature>
<feature type="chain" id="PRO_0000399868" description="Altered inheritance of mitochondria protein 41, mitochondrial">
    <location>
        <begin position="27"/>
        <end position="190"/>
    </location>
</feature>
<reference key="1">
    <citation type="journal article" date="2009" name="Nat. Biotechnol.">
        <title>Genome sequence of the recombinant protein production host Pichia pastoris.</title>
        <authorList>
            <person name="De Schutter K."/>
            <person name="Lin Y.-C."/>
            <person name="Tiels P."/>
            <person name="Van Hecke A."/>
            <person name="Glinka S."/>
            <person name="Weber-Lehmann J."/>
            <person name="Rouze P."/>
            <person name="Van de Peer Y."/>
            <person name="Callewaert N."/>
        </authorList>
    </citation>
    <scope>NUCLEOTIDE SEQUENCE [LARGE SCALE GENOMIC DNA]</scope>
    <source>
        <strain>GS115 / ATCC 20864</strain>
    </source>
</reference>
<accession>C4QXX8</accession>
<proteinExistence type="inferred from homology"/>
<protein>
    <recommendedName>
        <fullName>Altered inheritance of mitochondria protein 41, mitochondrial</fullName>
    </recommendedName>
</protein>
<sequence length="190" mass="21988">MFTLAARRLAIRLPRVRFGSSSAYDEALATIRNDLKLNFRFKADVLEKNVIRSILAETKNLEIDNKDKDLDEFKLYDLLSKMIKQRQDSAAIYLKEGSPDRFRQTGWNELREVDYITKYLEALPVASAEEIEAKVEPIVQSVLEEEGELKSPKEIFSRIPWKVVNQDWQASEGAVKNTVLRLYNLYKTDA</sequence>
<gene>
    <name type="primary">AIM41</name>
    <name type="ordered locus">PAS_chr1-4_0267</name>
</gene>
<name>AIM41_KOMPG</name>
<keyword id="KW-0496">Mitochondrion</keyword>
<keyword id="KW-1185">Reference proteome</keyword>
<keyword id="KW-0809">Transit peptide</keyword>
<evidence type="ECO:0000250" key="1"/>
<evidence type="ECO:0000255" key="2"/>
<evidence type="ECO:0000305" key="3"/>
<comment type="subcellular location">
    <subcellularLocation>
        <location evidence="1">Mitochondrion</location>
    </subcellularLocation>
</comment>
<comment type="similarity">
    <text evidence="3">Belongs to the AIM41 family.</text>
</comment>
<dbReference type="EMBL" id="FN392319">
    <property type="protein sequence ID" value="CAY68101.1"/>
    <property type="molecule type" value="Genomic_DNA"/>
</dbReference>
<dbReference type="RefSeq" id="XP_002490382.1">
    <property type="nucleotide sequence ID" value="XM_002490337.1"/>
</dbReference>
<dbReference type="SMR" id="C4QXX8"/>
<dbReference type="FunCoup" id="C4QXX8">
    <property type="interactions" value="104"/>
</dbReference>
<dbReference type="STRING" id="644223.C4QXX8"/>
<dbReference type="EnsemblFungi" id="CAY68101">
    <property type="protein sequence ID" value="CAY68101"/>
    <property type="gene ID" value="PAS_chr1-4_0267"/>
</dbReference>
<dbReference type="GeneID" id="8197874"/>
<dbReference type="KEGG" id="ppa:PAS_chr1-4_0267"/>
<dbReference type="eggNOG" id="ENOG502RZX9">
    <property type="taxonomic scope" value="Eukaryota"/>
</dbReference>
<dbReference type="HOGENOM" id="CLU_123460_0_0_1"/>
<dbReference type="InParanoid" id="C4QXX8"/>
<dbReference type="OMA" id="CIRTINS"/>
<dbReference type="OrthoDB" id="538640at2759"/>
<dbReference type="Proteomes" id="UP000000314">
    <property type="component" value="Chromosome 1"/>
</dbReference>
<dbReference type="GO" id="GO:0005739">
    <property type="term" value="C:mitochondrion"/>
    <property type="evidence" value="ECO:0007669"/>
    <property type="project" value="UniProtKB-SubCell"/>
</dbReference>
<dbReference type="GO" id="GO:0016884">
    <property type="term" value="F:carbon-nitrogen ligase activity, with glutamine as amido-N-donor"/>
    <property type="evidence" value="ECO:0007669"/>
    <property type="project" value="InterPro"/>
</dbReference>
<dbReference type="Gene3D" id="1.10.1510.10">
    <property type="entry name" value="Uncharacterised protein YqeY/AIM41 PF09424, N-terminal domain"/>
    <property type="match status" value="1"/>
</dbReference>
<dbReference type="InterPro" id="IPR003789">
    <property type="entry name" value="Asn/Gln_tRNA_amidoTrase-B-like"/>
</dbReference>
<dbReference type="InterPro" id="IPR019004">
    <property type="entry name" value="YqeY/Aim41"/>
</dbReference>
<dbReference type="InterPro" id="IPR042184">
    <property type="entry name" value="YqeY/Aim41_N"/>
</dbReference>
<dbReference type="PANTHER" id="PTHR28055">
    <property type="entry name" value="ALTERED INHERITANCE OF MITOCHONDRIA PROTEIN 41, MITOCHONDRIAL"/>
    <property type="match status" value="1"/>
</dbReference>
<dbReference type="PANTHER" id="PTHR28055:SF1">
    <property type="entry name" value="ALTERED INHERITANCE OF MITOCHONDRIA PROTEIN 41, MITOCHONDRIAL"/>
    <property type="match status" value="1"/>
</dbReference>
<dbReference type="Pfam" id="PF09424">
    <property type="entry name" value="YqeY"/>
    <property type="match status" value="1"/>
</dbReference>
<dbReference type="SUPFAM" id="SSF89095">
    <property type="entry name" value="GatB/YqeY motif"/>
    <property type="match status" value="1"/>
</dbReference>
<organism>
    <name type="scientific">Komagataella phaffii (strain GS115 / ATCC 20864)</name>
    <name type="common">Yeast</name>
    <name type="synonym">Pichia pastoris</name>
    <dbReference type="NCBI Taxonomy" id="644223"/>
    <lineage>
        <taxon>Eukaryota</taxon>
        <taxon>Fungi</taxon>
        <taxon>Dikarya</taxon>
        <taxon>Ascomycota</taxon>
        <taxon>Saccharomycotina</taxon>
        <taxon>Pichiomycetes</taxon>
        <taxon>Pichiales</taxon>
        <taxon>Pichiaceae</taxon>
        <taxon>Komagataella</taxon>
    </lineage>
</organism>